<keyword id="KW-0002">3D-structure</keyword>
<keyword id="KW-0007">Acetylation</keyword>
<keyword id="KW-0903">Direct protein sequencing</keyword>
<keyword id="KW-0249">Electron transport</keyword>
<keyword id="KW-0472">Membrane</keyword>
<keyword id="KW-0496">Mitochondrion</keyword>
<keyword id="KW-0999">Mitochondrion inner membrane</keyword>
<keyword id="KW-1185">Reference proteome</keyword>
<keyword id="KW-0679">Respiratory chain</keyword>
<keyword id="KW-0813">Transport</keyword>
<sequence>MASATRFIQWLRNWASGRDLQAKLQLRYQEISKRTQPPPKLPVGPSHKLSNNYYCTRDGRREAMPPSIVMSSQKVLVAGKPAESSAVAASEKKAVSPAPPIKRWELSQDEPYL</sequence>
<organism>
    <name type="scientific">Bos taurus</name>
    <name type="common">Bovine</name>
    <dbReference type="NCBI Taxonomy" id="9913"/>
    <lineage>
        <taxon>Eukaryota</taxon>
        <taxon>Metazoa</taxon>
        <taxon>Chordata</taxon>
        <taxon>Craniata</taxon>
        <taxon>Vertebrata</taxon>
        <taxon>Euteleostomi</taxon>
        <taxon>Mammalia</taxon>
        <taxon>Eutheria</taxon>
        <taxon>Laurasiatheria</taxon>
        <taxon>Artiodactyla</taxon>
        <taxon>Ruminantia</taxon>
        <taxon>Pecora</taxon>
        <taxon>Bovidae</taxon>
        <taxon>Bovinae</taxon>
        <taxon>Bos</taxon>
    </lineage>
</organism>
<comment type="function">
    <text evidence="1">Accessory subunit of the mitochondrial membrane respiratory chain NADH dehydrogenase (Complex I), that is believed not to be involved in catalysis. Complex I functions in the transfer of electrons from NADH to the respiratory chain. The immediate electron acceptor for the enzyme is believed to be ubiquinone.</text>
</comment>
<comment type="subunit">
    <text evidence="4 6">Complex I is composed of 45 different subunits.</text>
</comment>
<comment type="subcellular location">
    <subcellularLocation>
        <location evidence="8 9">Mitochondrion inner membrane</location>
        <topology evidence="7">Peripheral membrane protein</topology>
        <orientation evidence="7">Matrix side</orientation>
    </subcellularLocation>
</comment>
<comment type="similarity">
    <text evidence="7">Belongs to the complex I NDUFA7 subunit family.</text>
</comment>
<name>NDUA7_BOVIN</name>
<protein>
    <recommendedName>
        <fullName>NADH dehydrogenase [ubiquinone] 1 alpha subcomplex subunit 7</fullName>
    </recommendedName>
    <alternativeName>
        <fullName>Complex I-B14.5a</fullName>
        <shortName>CI-B14.5a</shortName>
    </alternativeName>
    <alternativeName>
        <fullName>NADH-ubiquinone oxidoreductase subunit B14.5a</fullName>
    </alternativeName>
</protein>
<proteinExistence type="evidence at protein level"/>
<gene>
    <name type="primary">NDUFA7</name>
    <name type="synonym">CI-B14-5A</name>
</gene>
<accession>Q05752</accession>
<accession>A6H7C3</accession>
<evidence type="ECO:0000250" key="1">
    <source>
        <dbReference type="UniProtKB" id="O95182"/>
    </source>
</evidence>
<evidence type="ECO:0000250" key="2">
    <source>
        <dbReference type="UniProtKB" id="Q9Z1P6"/>
    </source>
</evidence>
<evidence type="ECO:0000256" key="3">
    <source>
        <dbReference type="SAM" id="MobiDB-lite"/>
    </source>
</evidence>
<evidence type="ECO:0000269" key="4">
    <source>
    </source>
</evidence>
<evidence type="ECO:0000269" key="5">
    <source>
    </source>
</evidence>
<evidence type="ECO:0000269" key="6">
    <source>
    </source>
</evidence>
<evidence type="ECO:0000305" key="7"/>
<evidence type="ECO:0000305" key="8">
    <source>
    </source>
</evidence>
<evidence type="ECO:0000305" key="9">
    <source>
    </source>
</evidence>
<evidence type="ECO:0007829" key="10">
    <source>
        <dbReference type="PDB" id="7QSM"/>
    </source>
</evidence>
<evidence type="ECO:0007829" key="11">
    <source>
        <dbReference type="PDB" id="8Q1Y"/>
    </source>
</evidence>
<evidence type="ECO:0007829" key="12">
    <source>
        <dbReference type="PDB" id="8Q48"/>
    </source>
</evidence>
<feature type="initiator methionine" description="Removed" evidence="5">
    <location>
        <position position="1"/>
    </location>
</feature>
<feature type="chain" id="PRO_0000118833" description="NADH dehydrogenase [ubiquinone] 1 alpha subcomplex subunit 7">
    <location>
        <begin position="2"/>
        <end position="113"/>
    </location>
</feature>
<feature type="region of interest" description="Disordered" evidence="3">
    <location>
        <begin position="32"/>
        <end position="52"/>
    </location>
</feature>
<feature type="region of interest" description="Disordered" evidence="3">
    <location>
        <begin position="80"/>
        <end position="113"/>
    </location>
</feature>
<feature type="modified residue" description="N-acetylalanine" evidence="5">
    <location>
        <position position="2"/>
    </location>
</feature>
<feature type="modified residue" description="N6-acetyllysine" evidence="2">
    <location>
        <position position="40"/>
    </location>
</feature>
<feature type="helix" evidence="10">
    <location>
        <begin position="6"/>
        <end position="16"/>
    </location>
</feature>
<feature type="helix" evidence="10">
    <location>
        <begin position="20"/>
        <end position="23"/>
    </location>
</feature>
<feature type="strand" evidence="11">
    <location>
        <begin position="28"/>
        <end position="31"/>
    </location>
</feature>
<feature type="strand" evidence="10">
    <location>
        <begin position="49"/>
        <end position="51"/>
    </location>
</feature>
<feature type="helix" evidence="10">
    <location>
        <begin position="54"/>
        <end position="56"/>
    </location>
</feature>
<feature type="helix" evidence="10">
    <location>
        <begin position="60"/>
        <end position="62"/>
    </location>
</feature>
<feature type="strand" evidence="10">
    <location>
        <begin position="67"/>
        <end position="71"/>
    </location>
</feature>
<feature type="strand" evidence="12">
    <location>
        <begin position="97"/>
        <end position="99"/>
    </location>
</feature>
<dbReference type="EMBL" id="X68585">
    <property type="protein sequence ID" value="CAA48575.1"/>
    <property type="molecule type" value="mRNA"/>
</dbReference>
<dbReference type="EMBL" id="BC146193">
    <property type="protein sequence ID" value="AAI46194.1"/>
    <property type="molecule type" value="mRNA"/>
</dbReference>
<dbReference type="PIR" id="S27226">
    <property type="entry name" value="S27226"/>
</dbReference>
<dbReference type="RefSeq" id="NP_788831.1">
    <property type="nucleotide sequence ID" value="NM_176658.2"/>
</dbReference>
<dbReference type="PDB" id="5O31">
    <property type="method" value="EM"/>
    <property type="resolution" value="4.13 A"/>
    <property type="chains" value="r=2-113"/>
</dbReference>
<dbReference type="PDB" id="7DGQ">
    <property type="method" value="EM"/>
    <property type="resolution" value="5.00 A"/>
    <property type="chains" value="P=2-113"/>
</dbReference>
<dbReference type="PDB" id="7DGR">
    <property type="method" value="EM"/>
    <property type="resolution" value="4.60 A"/>
    <property type="chains" value="P=2-113"/>
</dbReference>
<dbReference type="PDB" id="7DGS">
    <property type="method" value="EM"/>
    <property type="resolution" value="7.80 A"/>
    <property type="chains" value="P=2-113"/>
</dbReference>
<dbReference type="PDB" id="7DGZ">
    <property type="method" value="EM"/>
    <property type="resolution" value="3.80 A"/>
    <property type="chains" value="P=2-113"/>
</dbReference>
<dbReference type="PDB" id="7DH0">
    <property type="method" value="EM"/>
    <property type="resolution" value="4.20 A"/>
    <property type="chains" value="P=2-113"/>
</dbReference>
<dbReference type="PDB" id="7DKF">
    <property type="method" value="EM"/>
    <property type="resolution" value="8.30 A"/>
    <property type="chains" value="P2=2-113"/>
</dbReference>
<dbReference type="PDB" id="7QSD">
    <property type="method" value="EM"/>
    <property type="resolution" value="3.10 A"/>
    <property type="chains" value="r=1-113"/>
</dbReference>
<dbReference type="PDB" id="7QSK">
    <property type="method" value="EM"/>
    <property type="resolution" value="2.84 A"/>
    <property type="chains" value="r=1-113"/>
</dbReference>
<dbReference type="PDB" id="7QSL">
    <property type="method" value="EM"/>
    <property type="resolution" value="2.76 A"/>
    <property type="chains" value="r=1-113"/>
</dbReference>
<dbReference type="PDB" id="7QSM">
    <property type="method" value="EM"/>
    <property type="resolution" value="2.30 A"/>
    <property type="chains" value="r=1-113"/>
</dbReference>
<dbReference type="PDB" id="7QSN">
    <property type="method" value="EM"/>
    <property type="resolution" value="2.81 A"/>
    <property type="chains" value="r=1-113"/>
</dbReference>
<dbReference type="PDB" id="7QSO">
    <property type="method" value="EM"/>
    <property type="resolution" value="3.02 A"/>
    <property type="chains" value="r=1-113"/>
</dbReference>
<dbReference type="PDB" id="7R41">
    <property type="method" value="EM"/>
    <property type="resolution" value="2.30 A"/>
    <property type="chains" value="r=1-113"/>
</dbReference>
<dbReference type="PDB" id="7R42">
    <property type="method" value="EM"/>
    <property type="resolution" value="2.30 A"/>
    <property type="chains" value="r=1-113"/>
</dbReference>
<dbReference type="PDB" id="7R43">
    <property type="method" value="EM"/>
    <property type="resolution" value="2.40 A"/>
    <property type="chains" value="r=1-113"/>
</dbReference>
<dbReference type="PDB" id="7R44">
    <property type="method" value="EM"/>
    <property type="resolution" value="2.40 A"/>
    <property type="chains" value="r=1-113"/>
</dbReference>
<dbReference type="PDB" id="7R45">
    <property type="method" value="EM"/>
    <property type="resolution" value="2.40 A"/>
    <property type="chains" value="r=1-113"/>
</dbReference>
<dbReference type="PDB" id="7R46">
    <property type="method" value="EM"/>
    <property type="resolution" value="2.40 A"/>
    <property type="chains" value="r=1-113"/>
</dbReference>
<dbReference type="PDB" id="7R47">
    <property type="method" value="EM"/>
    <property type="resolution" value="2.30 A"/>
    <property type="chains" value="r=1-113"/>
</dbReference>
<dbReference type="PDB" id="7R48">
    <property type="method" value="EM"/>
    <property type="resolution" value="2.30 A"/>
    <property type="chains" value="r=1-113"/>
</dbReference>
<dbReference type="PDB" id="7R4C">
    <property type="method" value="EM"/>
    <property type="resolution" value="2.30 A"/>
    <property type="chains" value="r=1-113"/>
</dbReference>
<dbReference type="PDB" id="7R4D">
    <property type="method" value="EM"/>
    <property type="resolution" value="2.30 A"/>
    <property type="chains" value="r=1-113"/>
</dbReference>
<dbReference type="PDB" id="7R4F">
    <property type="method" value="EM"/>
    <property type="resolution" value="2.40 A"/>
    <property type="chains" value="r=1-113"/>
</dbReference>
<dbReference type="PDB" id="7R4G">
    <property type="method" value="EM"/>
    <property type="resolution" value="2.50 A"/>
    <property type="chains" value="r=1-113"/>
</dbReference>
<dbReference type="PDB" id="8Q0A">
    <property type="method" value="EM"/>
    <property type="resolution" value="3.10 A"/>
    <property type="chains" value="r=1-113"/>
</dbReference>
<dbReference type="PDB" id="8Q0F">
    <property type="method" value="EM"/>
    <property type="resolution" value="3.10 A"/>
    <property type="chains" value="r=1-113"/>
</dbReference>
<dbReference type="PDB" id="8Q0J">
    <property type="method" value="EM"/>
    <property type="resolution" value="3.80 A"/>
    <property type="chains" value="r=1-113"/>
</dbReference>
<dbReference type="PDB" id="8Q0M">
    <property type="method" value="EM"/>
    <property type="resolution" value="3.10 A"/>
    <property type="chains" value="r=1-113"/>
</dbReference>
<dbReference type="PDB" id="8Q0O">
    <property type="method" value="EM"/>
    <property type="resolution" value="3.10 A"/>
    <property type="chains" value="r=1-113"/>
</dbReference>
<dbReference type="PDB" id="8Q0Q">
    <property type="method" value="EM"/>
    <property type="resolution" value="3.60 A"/>
    <property type="chains" value="r=1-113"/>
</dbReference>
<dbReference type="PDB" id="8Q1P">
    <property type="method" value="EM"/>
    <property type="resolution" value="2.90 A"/>
    <property type="chains" value="r=1-113"/>
</dbReference>
<dbReference type="PDB" id="8Q1U">
    <property type="method" value="EM"/>
    <property type="resolution" value="3.30 A"/>
    <property type="chains" value="r=1-113"/>
</dbReference>
<dbReference type="PDB" id="8Q1Y">
    <property type="method" value="EM"/>
    <property type="resolution" value="2.60 A"/>
    <property type="chains" value="r=1-113"/>
</dbReference>
<dbReference type="PDB" id="8Q25">
    <property type="method" value="EM"/>
    <property type="resolution" value="2.80 A"/>
    <property type="chains" value="r=1-113"/>
</dbReference>
<dbReference type="PDB" id="8Q45">
    <property type="method" value="EM"/>
    <property type="resolution" value="2.70 A"/>
    <property type="chains" value="r=1-113"/>
</dbReference>
<dbReference type="PDB" id="8Q46">
    <property type="method" value="EM"/>
    <property type="resolution" value="2.60 A"/>
    <property type="chains" value="r=1-113"/>
</dbReference>
<dbReference type="PDB" id="8Q47">
    <property type="method" value="EM"/>
    <property type="resolution" value="2.90 A"/>
    <property type="chains" value="r=1-113"/>
</dbReference>
<dbReference type="PDB" id="8Q48">
    <property type="method" value="EM"/>
    <property type="resolution" value="2.50 A"/>
    <property type="chains" value="r=1-113"/>
</dbReference>
<dbReference type="PDB" id="8Q49">
    <property type="method" value="EM"/>
    <property type="resolution" value="2.60 A"/>
    <property type="chains" value="r=1-113"/>
</dbReference>
<dbReference type="PDB" id="8Q4A">
    <property type="method" value="EM"/>
    <property type="resolution" value="2.60 A"/>
    <property type="chains" value="r=1-113"/>
</dbReference>
<dbReference type="PDBsum" id="5O31"/>
<dbReference type="PDBsum" id="7DGQ"/>
<dbReference type="PDBsum" id="7DGR"/>
<dbReference type="PDBsum" id="7DGS"/>
<dbReference type="PDBsum" id="7DGZ"/>
<dbReference type="PDBsum" id="7DH0"/>
<dbReference type="PDBsum" id="7DKF"/>
<dbReference type="PDBsum" id="7QSD"/>
<dbReference type="PDBsum" id="7QSK"/>
<dbReference type="PDBsum" id="7QSL"/>
<dbReference type="PDBsum" id="7QSM"/>
<dbReference type="PDBsum" id="7QSN"/>
<dbReference type="PDBsum" id="7QSO"/>
<dbReference type="PDBsum" id="7R41"/>
<dbReference type="PDBsum" id="7R42"/>
<dbReference type="PDBsum" id="7R43"/>
<dbReference type="PDBsum" id="7R44"/>
<dbReference type="PDBsum" id="7R45"/>
<dbReference type="PDBsum" id="7R46"/>
<dbReference type="PDBsum" id="7R47"/>
<dbReference type="PDBsum" id="7R48"/>
<dbReference type="PDBsum" id="7R4C"/>
<dbReference type="PDBsum" id="7R4D"/>
<dbReference type="PDBsum" id="7R4F"/>
<dbReference type="PDBsum" id="7R4G"/>
<dbReference type="PDBsum" id="8Q0A"/>
<dbReference type="PDBsum" id="8Q0F"/>
<dbReference type="PDBsum" id="8Q0J"/>
<dbReference type="PDBsum" id="8Q0M"/>
<dbReference type="PDBsum" id="8Q0O"/>
<dbReference type="PDBsum" id="8Q0Q"/>
<dbReference type="PDBsum" id="8Q1P"/>
<dbReference type="PDBsum" id="8Q1U"/>
<dbReference type="PDBsum" id="8Q1Y"/>
<dbReference type="PDBsum" id="8Q25"/>
<dbReference type="PDBsum" id="8Q45"/>
<dbReference type="PDBsum" id="8Q46"/>
<dbReference type="PDBsum" id="8Q47"/>
<dbReference type="PDBsum" id="8Q48"/>
<dbReference type="PDBsum" id="8Q49"/>
<dbReference type="PDBsum" id="8Q4A"/>
<dbReference type="EMDB" id="EMD-14127"/>
<dbReference type="EMDB" id="EMD-14132"/>
<dbReference type="EMDB" id="EMD-14133"/>
<dbReference type="EMDB" id="EMD-14134"/>
<dbReference type="EMDB" id="EMD-14139"/>
<dbReference type="EMDB" id="EMD-14140"/>
<dbReference type="EMDB" id="EMD-14251"/>
<dbReference type="EMDB" id="EMD-14256"/>
<dbReference type="EMDB" id="EMD-14261"/>
<dbReference type="EMDB" id="EMD-14266"/>
<dbReference type="EMDB" id="EMD-14272"/>
<dbReference type="EMDB" id="EMD-14277"/>
<dbReference type="EMDB" id="EMD-14282"/>
<dbReference type="EMDB" id="EMD-14287"/>
<dbReference type="EMDB" id="EMD-14292"/>
<dbReference type="EMDB" id="EMD-14297"/>
<dbReference type="EMDB" id="EMD-14302"/>
<dbReference type="EMDB" id="EMD-14307"/>
<dbReference type="EMDB" id="EMD-18051"/>
<dbReference type="EMDB" id="EMD-18052"/>
<dbReference type="EMDB" id="EMD-18054"/>
<dbReference type="EMDB" id="EMD-18055"/>
<dbReference type="EMDB" id="EMD-18057"/>
<dbReference type="EMDB" id="EMD-18059"/>
<dbReference type="EMDB" id="EMD-18066"/>
<dbReference type="EMDB" id="EMD-18067"/>
<dbReference type="EMDB" id="EMD-18068"/>
<dbReference type="EMDB" id="EMD-18069"/>
<dbReference type="EMDB" id="EMD-18138"/>
<dbReference type="EMDB" id="EMD-18139"/>
<dbReference type="EMDB" id="EMD-18140"/>
<dbReference type="EMDB" id="EMD-18141"/>
<dbReference type="EMDB" id="EMD-18142"/>
<dbReference type="EMDB" id="EMD-18143"/>
<dbReference type="EMDB" id="EMD-30673"/>
<dbReference type="EMDB" id="EMD-30674"/>
<dbReference type="EMDB" id="EMD-30675"/>
<dbReference type="EMDB" id="EMD-30676"/>
<dbReference type="EMDB" id="EMD-30677"/>
<dbReference type="EMDB" id="EMD-30706"/>
<dbReference type="EMDB" id="EMD-3731"/>
<dbReference type="SMR" id="Q05752"/>
<dbReference type="CORUM" id="Q05752"/>
<dbReference type="DIP" id="DIP-38795N"/>
<dbReference type="FunCoup" id="Q05752">
    <property type="interactions" value="1203"/>
</dbReference>
<dbReference type="IntAct" id="Q05752">
    <property type="interactions" value="2"/>
</dbReference>
<dbReference type="STRING" id="9913.ENSBTAP00000069350"/>
<dbReference type="TCDB" id="3.D.1.6.1">
    <property type="family name" value="the h+ or na+-translocating nadh dehydrogenase (ndh) family"/>
</dbReference>
<dbReference type="GlyGen" id="Q05752">
    <property type="glycosylation" value="1 site, 1 O-linked glycan (1 site)"/>
</dbReference>
<dbReference type="iPTMnet" id="Q05752"/>
<dbReference type="PaxDb" id="9913-ENSBTAP00000056610"/>
<dbReference type="PeptideAtlas" id="Q05752"/>
<dbReference type="Ensembl" id="ENSBTAT00000077911.2">
    <property type="protein sequence ID" value="ENSBTAP00000069350.1"/>
    <property type="gene ID" value="ENSBTAG00000052280.2"/>
</dbReference>
<dbReference type="GeneID" id="338063"/>
<dbReference type="KEGG" id="bta:338063"/>
<dbReference type="CTD" id="4701"/>
<dbReference type="VEuPathDB" id="HostDB:ENSBTAG00000052280"/>
<dbReference type="VGNC" id="VGNC:110055">
    <property type="gene designation" value="NDUFA7"/>
</dbReference>
<dbReference type="eggNOG" id="KOG4630">
    <property type="taxonomic scope" value="Eukaryota"/>
</dbReference>
<dbReference type="GeneTree" id="ENSGT00390000006553"/>
<dbReference type="HOGENOM" id="CLU_149566_0_0_1"/>
<dbReference type="InParanoid" id="Q05752"/>
<dbReference type="OMA" id="ANYYFTR"/>
<dbReference type="OrthoDB" id="10063829at2759"/>
<dbReference type="TreeFam" id="TF319126"/>
<dbReference type="Reactome" id="R-BTA-611105">
    <property type="pathway name" value="Respiratory electron transport"/>
</dbReference>
<dbReference type="Reactome" id="R-BTA-6799198">
    <property type="pathway name" value="Complex I biogenesis"/>
</dbReference>
<dbReference type="Proteomes" id="UP000009136">
    <property type="component" value="Chromosome 7"/>
</dbReference>
<dbReference type="Bgee" id="ENSBTAG00000052280">
    <property type="expression patterns" value="Expressed in tongue muscle and 108 other cell types or tissues"/>
</dbReference>
<dbReference type="GO" id="GO:0005743">
    <property type="term" value="C:mitochondrial inner membrane"/>
    <property type="evidence" value="ECO:0000314"/>
    <property type="project" value="AgBase"/>
</dbReference>
<dbReference type="GO" id="GO:0005739">
    <property type="term" value="C:mitochondrion"/>
    <property type="evidence" value="ECO:0000304"/>
    <property type="project" value="AgBase"/>
</dbReference>
<dbReference type="GO" id="GO:0045271">
    <property type="term" value="C:respiratory chain complex I"/>
    <property type="evidence" value="ECO:0000314"/>
    <property type="project" value="UniProtKB"/>
</dbReference>
<dbReference type="GO" id="GO:0016491">
    <property type="term" value="F:oxidoreductase activity"/>
    <property type="evidence" value="ECO:0000303"/>
    <property type="project" value="AgBase"/>
</dbReference>
<dbReference type="GO" id="GO:0042773">
    <property type="term" value="P:ATP synthesis coupled electron transport"/>
    <property type="evidence" value="ECO:0000304"/>
    <property type="project" value="AgBase"/>
</dbReference>
<dbReference type="GO" id="GO:0006120">
    <property type="term" value="P:mitochondrial electron transport, NADH to ubiquinone"/>
    <property type="evidence" value="ECO:0000314"/>
    <property type="project" value="AgBase"/>
</dbReference>
<dbReference type="InterPro" id="IPR009947">
    <property type="entry name" value="NDUA7"/>
</dbReference>
<dbReference type="PANTHER" id="PTHR12485:SF1">
    <property type="entry name" value="NADH DEHYDROGENASE [UBIQUINONE] 1 ALPHA SUBCOMPLEX SUBUNIT 7"/>
    <property type="match status" value="1"/>
</dbReference>
<dbReference type="PANTHER" id="PTHR12485">
    <property type="entry name" value="NADH-UBIQUINONE OXIDOREDUCTASE SUBUNIT B"/>
    <property type="match status" value="1"/>
</dbReference>
<dbReference type="Pfam" id="PF07347">
    <property type="entry name" value="CI-B14_5a"/>
    <property type="match status" value="1"/>
</dbReference>
<reference key="1">
    <citation type="journal article" date="1992" name="FEBS Lett.">
        <title>Complementary DNA sequences of two 14.5 kDa subunits of NADH:ubiquinone oxidoreductase from bovine heart mitochondria. Completion of the primary structure of the complex?</title>
        <authorList>
            <person name="Arizmendi J.M."/>
            <person name="Skehel J.M."/>
            <person name="Runswick M.J."/>
            <person name="Fearnley I.M."/>
            <person name="Walker J.E."/>
        </authorList>
    </citation>
    <scope>NUCLEOTIDE SEQUENCE [MRNA]</scope>
    <scope>ACETYLATION AT ALA-2</scope>
    <scope>PARTIAL PROTEIN SEQUENCE</scope>
    <source>
        <tissue>Heart</tissue>
    </source>
</reference>
<reference key="2">
    <citation type="submission" date="2007-06" db="EMBL/GenBank/DDBJ databases">
        <authorList>
            <consortium name="NIH - Mammalian Gene Collection (MGC) project"/>
        </authorList>
    </citation>
    <scope>NUCLEOTIDE SEQUENCE [LARGE SCALE MRNA]</scope>
    <source>
        <strain>Hereford</strain>
        <tissue>Fetal skin</tissue>
    </source>
</reference>
<reference key="3">
    <citation type="journal article" date="2000" name="Biochemistry">
        <title>Resolution of the membrane domain of bovine complex I into subcomplexes: implications for the structural organization of the enzyme.</title>
        <authorList>
            <person name="Sazanov L.A."/>
            <person name="Peak-Chew S.Y."/>
            <person name="Fearnley I.M."/>
            <person name="Walker J.E."/>
        </authorList>
    </citation>
    <scope>PARTIAL PROTEIN SEQUENCE</scope>
    <scope>SUBUNIT</scope>
    <scope>IDENTIFICATION IN COMPLEX I</scope>
    <scope>SUBCELLULAR LOCATION</scope>
</reference>
<reference key="4">
    <citation type="journal article" date="2008" name="Anal. Biochem.">
        <title>Subunit analysis of bovine heart complex I by reversed-phase high-performance liquid chromatography, electrospray ionization-tandem mass spectrometry, and matrix-assisted laser desorption/ionization-time-of-flight mass spectrometry.</title>
        <authorList>
            <person name="Lemma-Gray P."/>
            <person name="Valusova E."/>
            <person name="Carroll C.A."/>
            <person name="Weintraub S.T."/>
            <person name="Musatov A."/>
            <person name="Robinson N.C."/>
        </authorList>
    </citation>
    <scope>SUBUNIT</scope>
    <scope>IDENTIFICATION IN COMPLEX I</scope>
    <scope>SUBCELLULAR LOCATION</scope>
</reference>